<gene>
    <name type="ordered locus">At1g30560</name>
    <name type="ORF">T5I8.1</name>
</gene>
<dbReference type="EMBL" id="AC007060">
    <property type="protein sequence ID" value="AAD25743.1"/>
    <property type="molecule type" value="Genomic_DNA"/>
</dbReference>
<dbReference type="EMBL" id="CP002684">
    <property type="protein sequence ID" value="AEE31244.1"/>
    <property type="molecule type" value="Genomic_DNA"/>
</dbReference>
<dbReference type="PIR" id="G86430">
    <property type="entry name" value="G86430"/>
</dbReference>
<dbReference type="SMR" id="Q9SA71"/>
<dbReference type="FunCoup" id="Q9SA71">
    <property type="interactions" value="1372"/>
</dbReference>
<dbReference type="STRING" id="3702.Q9SA71"/>
<dbReference type="GlyGen" id="Q9SA71">
    <property type="glycosylation" value="1 site"/>
</dbReference>
<dbReference type="iPTMnet" id="Q9SA71"/>
<dbReference type="PaxDb" id="3702-AT1G30560.1"/>
<dbReference type="EnsemblPlants" id="AT1G30560.1">
    <property type="protein sequence ID" value="AT1G30560.1"/>
    <property type="gene ID" value="AT1G30560"/>
</dbReference>
<dbReference type="GeneID" id="839936"/>
<dbReference type="Gramene" id="AT1G30560.1">
    <property type="protein sequence ID" value="AT1G30560.1"/>
    <property type="gene ID" value="AT1G30560"/>
</dbReference>
<dbReference type="KEGG" id="ath:AT1G30560"/>
<dbReference type="Araport" id="AT1G30560"/>
<dbReference type="TAIR" id="AT1G30560">
    <property type="gene designation" value="G3PP3"/>
</dbReference>
<dbReference type="eggNOG" id="KOG2533">
    <property type="taxonomic scope" value="Eukaryota"/>
</dbReference>
<dbReference type="HOGENOM" id="CLU_001265_31_6_1"/>
<dbReference type="InParanoid" id="Q9SA71"/>
<dbReference type="OMA" id="FKQYQAM"/>
<dbReference type="OrthoDB" id="3639251at2759"/>
<dbReference type="PhylomeDB" id="Q9SA71"/>
<dbReference type="BRENDA" id="7.6.2.10">
    <property type="organism ID" value="399"/>
</dbReference>
<dbReference type="PRO" id="PR:Q9SA71"/>
<dbReference type="Proteomes" id="UP000006548">
    <property type="component" value="Chromosome 1"/>
</dbReference>
<dbReference type="ExpressionAtlas" id="Q9SA71">
    <property type="expression patterns" value="baseline and differential"/>
</dbReference>
<dbReference type="GO" id="GO:0016020">
    <property type="term" value="C:membrane"/>
    <property type="evidence" value="ECO:0007669"/>
    <property type="project" value="UniProtKB-SubCell"/>
</dbReference>
<dbReference type="GO" id="GO:0061513">
    <property type="term" value="F:glucose 6-phosphate:phosphate antiporter activity"/>
    <property type="evidence" value="ECO:0007669"/>
    <property type="project" value="InterPro"/>
</dbReference>
<dbReference type="GO" id="GO:0055062">
    <property type="term" value="P:phosphate ion homeostasis"/>
    <property type="evidence" value="ECO:0000270"/>
    <property type="project" value="TAIR"/>
</dbReference>
<dbReference type="CDD" id="cd17344">
    <property type="entry name" value="MFS_SLC37A1_2"/>
    <property type="match status" value="1"/>
</dbReference>
<dbReference type="FunFam" id="1.20.1250.20:FF:000050">
    <property type="entry name" value="glucose-6-phosphate exchanger SLC37A2 isoform X1"/>
    <property type="match status" value="1"/>
</dbReference>
<dbReference type="FunFam" id="1.20.1250.20:FF:000028">
    <property type="entry name" value="Sugar phosphate exchanger 3 isoform 1"/>
    <property type="match status" value="1"/>
</dbReference>
<dbReference type="Gene3D" id="1.20.1250.20">
    <property type="entry name" value="MFS general substrate transporter like domains"/>
    <property type="match status" value="2"/>
</dbReference>
<dbReference type="InterPro" id="IPR011701">
    <property type="entry name" value="MFS"/>
</dbReference>
<dbReference type="InterPro" id="IPR020846">
    <property type="entry name" value="MFS_dom"/>
</dbReference>
<dbReference type="InterPro" id="IPR036259">
    <property type="entry name" value="MFS_trans_sf"/>
</dbReference>
<dbReference type="InterPro" id="IPR044740">
    <property type="entry name" value="SLC37A1_2"/>
</dbReference>
<dbReference type="InterPro" id="IPR000849">
    <property type="entry name" value="Sugar_P_transporter"/>
</dbReference>
<dbReference type="PANTHER" id="PTHR43184:SF19">
    <property type="entry name" value="GLYCEROL-3-PHOSPHATE TRANSPORTER 3-RELATED"/>
    <property type="match status" value="1"/>
</dbReference>
<dbReference type="PANTHER" id="PTHR43184">
    <property type="entry name" value="MAJOR FACILITATOR SUPERFAMILY TRANSPORTER 16, ISOFORM B"/>
    <property type="match status" value="1"/>
</dbReference>
<dbReference type="Pfam" id="PF07690">
    <property type="entry name" value="MFS_1"/>
    <property type="match status" value="1"/>
</dbReference>
<dbReference type="PIRSF" id="PIRSF002808">
    <property type="entry name" value="Hexose_phosphate_transp"/>
    <property type="match status" value="1"/>
</dbReference>
<dbReference type="SUPFAM" id="SSF103473">
    <property type="entry name" value="MFS general substrate transporter"/>
    <property type="match status" value="1"/>
</dbReference>
<dbReference type="PROSITE" id="PS50850">
    <property type="entry name" value="MFS"/>
    <property type="match status" value="1"/>
</dbReference>
<accession>Q9SA71</accession>
<comment type="subcellular location">
    <subcellularLocation>
        <location evidence="2">Membrane</location>
        <topology evidence="2">Multi-pass membrane protein</topology>
    </subcellularLocation>
</comment>
<comment type="similarity">
    <text evidence="2">Belongs to the major facilitator superfamily. Organophosphate:Pi antiporter (OPA) (TC 2.A.1.4) family.</text>
</comment>
<proteinExistence type="inferred from homology"/>
<protein>
    <recommendedName>
        <fullName>Putative glycerol-3-phosphate transporter 3</fullName>
        <shortName>G-3-P transporter 3</shortName>
    </recommendedName>
    <alternativeName>
        <fullName>Glycerol-3-phosphate permease 3</fullName>
        <shortName>AtG3Pp3</shortName>
        <shortName>G-3-P permease 3</shortName>
    </alternativeName>
</protein>
<feature type="chain" id="PRO_0000403114" description="Putative glycerol-3-phosphate transporter 3">
    <location>
        <begin position="1"/>
        <end position="510"/>
    </location>
</feature>
<feature type="transmembrane region" description="Helical" evidence="1">
    <location>
        <begin position="31"/>
        <end position="51"/>
    </location>
</feature>
<feature type="transmembrane region" description="Helical" evidence="1">
    <location>
        <begin position="91"/>
        <end position="111"/>
    </location>
</feature>
<feature type="transmembrane region" description="Helical" evidence="1">
    <location>
        <begin position="123"/>
        <end position="143"/>
    </location>
</feature>
<feature type="transmembrane region" description="Helical" evidence="1">
    <location>
        <begin position="158"/>
        <end position="178"/>
    </location>
</feature>
<feature type="transmembrane region" description="Helical" evidence="1">
    <location>
        <begin position="185"/>
        <end position="205"/>
    </location>
</feature>
<feature type="transmembrane region" description="Helical" evidence="1">
    <location>
        <begin position="217"/>
        <end position="237"/>
    </location>
</feature>
<feature type="transmembrane region" description="Helical" evidence="1">
    <location>
        <begin position="279"/>
        <end position="299"/>
    </location>
</feature>
<feature type="transmembrane region" description="Helical" evidence="1">
    <location>
        <begin position="331"/>
        <end position="351"/>
    </location>
</feature>
<feature type="transmembrane region" description="Helical" evidence="1">
    <location>
        <begin position="355"/>
        <end position="375"/>
    </location>
</feature>
<feature type="transmembrane region" description="Helical" evidence="1">
    <location>
        <begin position="378"/>
        <end position="398"/>
    </location>
</feature>
<feature type="transmembrane region" description="Helical" evidence="1">
    <location>
        <begin position="436"/>
        <end position="456"/>
    </location>
</feature>
<feature type="transmembrane region" description="Helical" evidence="1">
    <location>
        <begin position="459"/>
        <end position="479"/>
    </location>
</feature>
<organism>
    <name type="scientific">Arabidopsis thaliana</name>
    <name type="common">Mouse-ear cress</name>
    <dbReference type="NCBI Taxonomy" id="3702"/>
    <lineage>
        <taxon>Eukaryota</taxon>
        <taxon>Viridiplantae</taxon>
        <taxon>Streptophyta</taxon>
        <taxon>Embryophyta</taxon>
        <taxon>Tracheophyta</taxon>
        <taxon>Spermatophyta</taxon>
        <taxon>Magnoliopsida</taxon>
        <taxon>eudicotyledons</taxon>
        <taxon>Gunneridae</taxon>
        <taxon>Pentapetalae</taxon>
        <taxon>rosids</taxon>
        <taxon>malvids</taxon>
        <taxon>Brassicales</taxon>
        <taxon>Brassicaceae</taxon>
        <taxon>Camelineae</taxon>
        <taxon>Arabidopsis</taxon>
    </lineage>
</organism>
<evidence type="ECO:0000255" key="1"/>
<evidence type="ECO:0000305" key="2"/>
<reference key="1">
    <citation type="journal article" date="2000" name="Nature">
        <title>Sequence and analysis of chromosome 1 of the plant Arabidopsis thaliana.</title>
        <authorList>
            <person name="Theologis A."/>
            <person name="Ecker J.R."/>
            <person name="Palm C.J."/>
            <person name="Federspiel N.A."/>
            <person name="Kaul S."/>
            <person name="White O."/>
            <person name="Alonso J."/>
            <person name="Altafi H."/>
            <person name="Araujo R."/>
            <person name="Bowman C.L."/>
            <person name="Brooks S.Y."/>
            <person name="Buehler E."/>
            <person name="Chan A."/>
            <person name="Chao Q."/>
            <person name="Chen H."/>
            <person name="Cheuk R.F."/>
            <person name="Chin C.W."/>
            <person name="Chung M.K."/>
            <person name="Conn L."/>
            <person name="Conway A.B."/>
            <person name="Conway A.R."/>
            <person name="Creasy T.H."/>
            <person name="Dewar K."/>
            <person name="Dunn P."/>
            <person name="Etgu P."/>
            <person name="Feldblyum T.V."/>
            <person name="Feng J.-D."/>
            <person name="Fong B."/>
            <person name="Fujii C.Y."/>
            <person name="Gill J.E."/>
            <person name="Goldsmith A.D."/>
            <person name="Haas B."/>
            <person name="Hansen N.F."/>
            <person name="Hughes B."/>
            <person name="Huizar L."/>
            <person name="Hunter J.L."/>
            <person name="Jenkins J."/>
            <person name="Johnson-Hopson C."/>
            <person name="Khan S."/>
            <person name="Khaykin E."/>
            <person name="Kim C.J."/>
            <person name="Koo H.L."/>
            <person name="Kremenetskaia I."/>
            <person name="Kurtz D.B."/>
            <person name="Kwan A."/>
            <person name="Lam B."/>
            <person name="Langin-Hooper S."/>
            <person name="Lee A."/>
            <person name="Lee J.M."/>
            <person name="Lenz C.A."/>
            <person name="Li J.H."/>
            <person name="Li Y.-P."/>
            <person name="Lin X."/>
            <person name="Liu S.X."/>
            <person name="Liu Z.A."/>
            <person name="Luros J.S."/>
            <person name="Maiti R."/>
            <person name="Marziali A."/>
            <person name="Militscher J."/>
            <person name="Miranda M."/>
            <person name="Nguyen M."/>
            <person name="Nierman W.C."/>
            <person name="Osborne B.I."/>
            <person name="Pai G."/>
            <person name="Peterson J."/>
            <person name="Pham P.K."/>
            <person name="Rizzo M."/>
            <person name="Rooney T."/>
            <person name="Rowley D."/>
            <person name="Sakano H."/>
            <person name="Salzberg S.L."/>
            <person name="Schwartz J.R."/>
            <person name="Shinn P."/>
            <person name="Southwick A.M."/>
            <person name="Sun H."/>
            <person name="Tallon L.J."/>
            <person name="Tambunga G."/>
            <person name="Toriumi M.J."/>
            <person name="Town C.D."/>
            <person name="Utterback T."/>
            <person name="Van Aken S."/>
            <person name="Vaysberg M."/>
            <person name="Vysotskaia V.S."/>
            <person name="Walker M."/>
            <person name="Wu D."/>
            <person name="Yu G."/>
            <person name="Fraser C.M."/>
            <person name="Venter J.C."/>
            <person name="Davis R.W."/>
        </authorList>
    </citation>
    <scope>NUCLEOTIDE SEQUENCE [LARGE SCALE GENOMIC DNA]</scope>
    <source>
        <strain>cv. Columbia</strain>
    </source>
</reference>
<reference key="2">
    <citation type="journal article" date="2017" name="Plant J.">
        <title>Araport11: a complete reannotation of the Arabidopsis thaliana reference genome.</title>
        <authorList>
            <person name="Cheng C.Y."/>
            <person name="Krishnakumar V."/>
            <person name="Chan A.P."/>
            <person name="Thibaud-Nissen F."/>
            <person name="Schobel S."/>
            <person name="Town C.D."/>
        </authorList>
    </citation>
    <scope>GENOME REANNOTATION</scope>
    <source>
        <strain>cv. Columbia</strain>
    </source>
</reference>
<sequence length="510" mass="55089">MASWTSSEFLYEEVKPPGIHFLERFRRSGKLSFKQYQAMVFVLTFIAYIAFHATRKPNSIVKGTLSEQPTGHFKGADKGGWAPFDGPDGTALLGQIDLAFLSVYAVGMFVAGHLGDRLDLRTFLTIGMVGTGVCTALFGVAFWANIHAFYYFLAIQTLAGWFQSIGWPCVVAVLGNWFDKKRRGVIMGVWSAHTSLGNIIGTLIATGLLKFGWGWSFVGPALLITFLGIVVYLFLPVNPHAVEAERDGSEVDSTMRLGDTITESFLSSRTSTGFDRRAVGFLAAWKIPGVAPFAFCLFFTKLVSYTFLYWLPFYVSQTEIGGEQLSQETSGNLSTLFDVGGVVGGILAGYFSDQLDGRAITAGGFIYLTIPALFLYRIYGHVSMTINIILMFVAGLFVNGPYALITTAVAADLGTHKSLKGNARALATVTAIIDGTGSVGAAIGPVLTGYIAAISWDAVFYMLMTAALISGLLLTTLIIEEVKTLLYGSSEEDHEVAAASTSRPPIDVLI</sequence>
<name>GLPT3_ARATH</name>
<keyword id="KW-0472">Membrane</keyword>
<keyword id="KW-1185">Reference proteome</keyword>
<keyword id="KW-0762">Sugar transport</keyword>
<keyword id="KW-0812">Transmembrane</keyword>
<keyword id="KW-1133">Transmembrane helix</keyword>
<keyword id="KW-0813">Transport</keyword>